<accession>Q6F9T3</accession>
<gene>
    <name evidence="1" type="primary">coq7</name>
    <name type="ordered locus">ACIAD2405</name>
</gene>
<sequence length="211" mass="23414">MRHYTGIDRLINSFDQALRSLVPGTTAAQRSNPAEQTQAPLTVSDARHVAGLMRVNHSGEVCAQALYHGQALTAKLPNVRLEMEQAAIEEQDHLAWCEDRLKELDSVPSLLNPVWYSLSFGMGAIAGIAGDKYSLGFVAETERQVSSHLQDHLKQLPTHDERSKRILEQMNQDELHHRDTALNAGGVELPVAVKITMTAISKLMTKTSYYI</sequence>
<reference key="1">
    <citation type="journal article" date="2004" name="Nucleic Acids Res.">
        <title>Unique features revealed by the genome sequence of Acinetobacter sp. ADP1, a versatile and naturally transformation competent bacterium.</title>
        <authorList>
            <person name="Barbe V."/>
            <person name="Vallenet D."/>
            <person name="Fonknechten N."/>
            <person name="Kreimeyer A."/>
            <person name="Oztas S."/>
            <person name="Labarre L."/>
            <person name="Cruveiller S."/>
            <person name="Robert C."/>
            <person name="Duprat S."/>
            <person name="Wincker P."/>
            <person name="Ornston L.N."/>
            <person name="Weissenbach J."/>
            <person name="Marliere P."/>
            <person name="Cohen G.N."/>
            <person name="Medigue C."/>
        </authorList>
    </citation>
    <scope>NUCLEOTIDE SEQUENCE [LARGE SCALE GENOMIC DNA]</scope>
    <source>
        <strain>ATCC 33305 / BD413 / ADP1</strain>
    </source>
</reference>
<protein>
    <recommendedName>
        <fullName evidence="1">3-demethoxyubiquinol 3-hydroxylase</fullName>
        <shortName evidence="1">DMQ hydroxylase</shortName>
        <ecNumber evidence="1">1.14.99.60</ecNumber>
    </recommendedName>
    <alternativeName>
        <fullName evidence="1">2-nonaprenyl-3-methyl-6-methoxy-1,4-benzoquinol hydroxylase</fullName>
    </alternativeName>
</protein>
<organism>
    <name type="scientific">Acinetobacter baylyi (strain ATCC 33305 / BD413 / ADP1)</name>
    <dbReference type="NCBI Taxonomy" id="62977"/>
    <lineage>
        <taxon>Bacteria</taxon>
        <taxon>Pseudomonadati</taxon>
        <taxon>Pseudomonadota</taxon>
        <taxon>Gammaproteobacteria</taxon>
        <taxon>Moraxellales</taxon>
        <taxon>Moraxellaceae</taxon>
        <taxon>Acinetobacter</taxon>
    </lineage>
</organism>
<evidence type="ECO:0000255" key="1">
    <source>
        <dbReference type="HAMAP-Rule" id="MF_01658"/>
    </source>
</evidence>
<keyword id="KW-1003">Cell membrane</keyword>
<keyword id="KW-0408">Iron</keyword>
<keyword id="KW-0472">Membrane</keyword>
<keyword id="KW-0479">Metal-binding</keyword>
<keyword id="KW-0503">Monooxygenase</keyword>
<keyword id="KW-0560">Oxidoreductase</keyword>
<keyword id="KW-0831">Ubiquinone biosynthesis</keyword>
<dbReference type="EC" id="1.14.99.60" evidence="1"/>
<dbReference type="EMBL" id="CR543861">
    <property type="protein sequence ID" value="CAG69180.1"/>
    <property type="molecule type" value="Genomic_DNA"/>
</dbReference>
<dbReference type="RefSeq" id="WP_004928305.1">
    <property type="nucleotide sequence ID" value="NC_005966.1"/>
</dbReference>
<dbReference type="SMR" id="Q6F9T3"/>
<dbReference type="STRING" id="202950.GCA_001485005_00006"/>
<dbReference type="GeneID" id="45234716"/>
<dbReference type="KEGG" id="aci:ACIAD2405"/>
<dbReference type="eggNOG" id="COG2941">
    <property type="taxonomic scope" value="Bacteria"/>
</dbReference>
<dbReference type="HOGENOM" id="CLU_088601_0_0_6"/>
<dbReference type="OrthoDB" id="5192789at2"/>
<dbReference type="BioCyc" id="ASP62977:ACIAD_RS10995-MONOMER"/>
<dbReference type="UniPathway" id="UPA00232"/>
<dbReference type="Proteomes" id="UP000000430">
    <property type="component" value="Chromosome"/>
</dbReference>
<dbReference type="GO" id="GO:0005886">
    <property type="term" value="C:plasma membrane"/>
    <property type="evidence" value="ECO:0007669"/>
    <property type="project" value="UniProtKB-SubCell"/>
</dbReference>
<dbReference type="GO" id="GO:0008682">
    <property type="term" value="F:3-demethoxyubiquinol 3-hydroxylase activity"/>
    <property type="evidence" value="ECO:0007669"/>
    <property type="project" value="UniProtKB-EC"/>
</dbReference>
<dbReference type="GO" id="GO:0046872">
    <property type="term" value="F:metal ion binding"/>
    <property type="evidence" value="ECO:0007669"/>
    <property type="project" value="UniProtKB-KW"/>
</dbReference>
<dbReference type="GO" id="GO:0006744">
    <property type="term" value="P:ubiquinone biosynthetic process"/>
    <property type="evidence" value="ECO:0007669"/>
    <property type="project" value="UniProtKB-UniRule"/>
</dbReference>
<dbReference type="CDD" id="cd01042">
    <property type="entry name" value="DMQH"/>
    <property type="match status" value="1"/>
</dbReference>
<dbReference type="Gene3D" id="1.20.1260.10">
    <property type="match status" value="1"/>
</dbReference>
<dbReference type="HAMAP" id="MF_01658">
    <property type="entry name" value="COQ7"/>
    <property type="match status" value="1"/>
</dbReference>
<dbReference type="InterPro" id="IPR047809">
    <property type="entry name" value="COQ7_proteobact"/>
</dbReference>
<dbReference type="InterPro" id="IPR012347">
    <property type="entry name" value="Ferritin-like"/>
</dbReference>
<dbReference type="InterPro" id="IPR009078">
    <property type="entry name" value="Ferritin-like_SF"/>
</dbReference>
<dbReference type="InterPro" id="IPR011566">
    <property type="entry name" value="Ubq_synth_Coq7"/>
</dbReference>
<dbReference type="NCBIfam" id="NF033656">
    <property type="entry name" value="DMQ_monoox_COQ7"/>
    <property type="match status" value="1"/>
</dbReference>
<dbReference type="PANTHER" id="PTHR11237:SF4">
    <property type="entry name" value="5-DEMETHOXYUBIQUINONE HYDROXYLASE, MITOCHONDRIAL"/>
    <property type="match status" value="1"/>
</dbReference>
<dbReference type="PANTHER" id="PTHR11237">
    <property type="entry name" value="COENZYME Q10 BIOSYNTHESIS PROTEIN 7"/>
    <property type="match status" value="1"/>
</dbReference>
<dbReference type="Pfam" id="PF03232">
    <property type="entry name" value="COQ7"/>
    <property type="match status" value="1"/>
</dbReference>
<dbReference type="SUPFAM" id="SSF47240">
    <property type="entry name" value="Ferritin-like"/>
    <property type="match status" value="1"/>
</dbReference>
<feature type="chain" id="PRO_0000338653" description="3-demethoxyubiquinol 3-hydroxylase">
    <location>
        <begin position="1"/>
        <end position="211"/>
    </location>
</feature>
<feature type="binding site" evidence="1">
    <location>
        <position position="60"/>
    </location>
    <ligand>
        <name>Fe cation</name>
        <dbReference type="ChEBI" id="CHEBI:24875"/>
        <label>1</label>
    </ligand>
</feature>
<feature type="binding site" evidence="1">
    <location>
        <position position="90"/>
    </location>
    <ligand>
        <name>Fe cation</name>
        <dbReference type="ChEBI" id="CHEBI:24875"/>
        <label>1</label>
    </ligand>
</feature>
<feature type="binding site" evidence="1">
    <location>
        <position position="90"/>
    </location>
    <ligand>
        <name>Fe cation</name>
        <dbReference type="ChEBI" id="CHEBI:24875"/>
        <label>2</label>
    </ligand>
</feature>
<feature type="binding site" evidence="1">
    <location>
        <position position="93"/>
    </location>
    <ligand>
        <name>Fe cation</name>
        <dbReference type="ChEBI" id="CHEBI:24875"/>
        <label>1</label>
    </ligand>
</feature>
<feature type="binding site" evidence="1">
    <location>
        <position position="142"/>
    </location>
    <ligand>
        <name>Fe cation</name>
        <dbReference type="ChEBI" id="CHEBI:24875"/>
        <label>2</label>
    </ligand>
</feature>
<feature type="binding site" evidence="1">
    <location>
        <position position="174"/>
    </location>
    <ligand>
        <name>Fe cation</name>
        <dbReference type="ChEBI" id="CHEBI:24875"/>
        <label>1</label>
    </ligand>
</feature>
<feature type="binding site" evidence="1">
    <location>
        <position position="174"/>
    </location>
    <ligand>
        <name>Fe cation</name>
        <dbReference type="ChEBI" id="CHEBI:24875"/>
        <label>2</label>
    </ligand>
</feature>
<feature type="binding site" evidence="1">
    <location>
        <position position="177"/>
    </location>
    <ligand>
        <name>Fe cation</name>
        <dbReference type="ChEBI" id="CHEBI:24875"/>
        <label>2</label>
    </ligand>
</feature>
<comment type="function">
    <text evidence="1">Catalyzes the hydroxylation of 2-nonaprenyl-3-methyl-6-methoxy-1,4-benzoquinol during ubiquinone biosynthesis.</text>
</comment>
<comment type="catalytic activity">
    <reaction evidence="1">
        <text>a 5-methoxy-2-methyl-3-(all-trans-polyprenyl)benzene-1,4-diol + AH2 + O2 = a 3-demethylubiquinol + A + H2O</text>
        <dbReference type="Rhea" id="RHEA:50908"/>
        <dbReference type="Rhea" id="RHEA-COMP:10859"/>
        <dbReference type="Rhea" id="RHEA-COMP:10914"/>
        <dbReference type="ChEBI" id="CHEBI:13193"/>
        <dbReference type="ChEBI" id="CHEBI:15377"/>
        <dbReference type="ChEBI" id="CHEBI:15379"/>
        <dbReference type="ChEBI" id="CHEBI:17499"/>
        <dbReference type="ChEBI" id="CHEBI:84167"/>
        <dbReference type="ChEBI" id="CHEBI:84422"/>
        <dbReference type="EC" id="1.14.99.60"/>
    </reaction>
</comment>
<comment type="cofactor">
    <cofactor evidence="1">
        <name>Fe cation</name>
        <dbReference type="ChEBI" id="CHEBI:24875"/>
    </cofactor>
    <text evidence="1">Binds 2 iron ions per subunit.</text>
</comment>
<comment type="pathway">
    <text evidence="1">Cofactor biosynthesis; ubiquinone biosynthesis.</text>
</comment>
<comment type="subcellular location">
    <subcellularLocation>
        <location evidence="1">Cell membrane</location>
        <topology evidence="1">Peripheral membrane protein</topology>
    </subcellularLocation>
</comment>
<comment type="similarity">
    <text evidence="1">Belongs to the COQ7 family.</text>
</comment>
<proteinExistence type="inferred from homology"/>
<name>COQ7_ACIAD</name>